<evidence type="ECO:0000255" key="1">
    <source>
        <dbReference type="HAMAP-Rule" id="MF_00336"/>
    </source>
</evidence>
<name>BIOD_NEIMB</name>
<organism>
    <name type="scientific">Neisseria meningitidis serogroup B (strain ATCC BAA-335 / MC58)</name>
    <dbReference type="NCBI Taxonomy" id="122586"/>
    <lineage>
        <taxon>Bacteria</taxon>
        <taxon>Pseudomonadati</taxon>
        <taxon>Pseudomonadota</taxon>
        <taxon>Betaproteobacteria</taxon>
        <taxon>Neisseriales</taxon>
        <taxon>Neisseriaceae</taxon>
        <taxon>Neisseria</taxon>
    </lineage>
</organism>
<feature type="chain" id="PRO_0000187979" description="ATP-dependent dethiobiotin synthetase BioD">
    <location>
        <begin position="1"/>
        <end position="215"/>
    </location>
</feature>
<feature type="active site" evidence="1">
    <location>
        <position position="38"/>
    </location>
</feature>
<feature type="binding site" evidence="1">
    <location>
        <begin position="13"/>
        <end position="18"/>
    </location>
    <ligand>
        <name>ATP</name>
        <dbReference type="ChEBI" id="CHEBI:30616"/>
    </ligand>
</feature>
<feature type="binding site" evidence="1">
    <location>
        <position position="17"/>
    </location>
    <ligand>
        <name>Mg(2+)</name>
        <dbReference type="ChEBI" id="CHEBI:18420"/>
    </ligand>
</feature>
<feature type="binding site" evidence="1">
    <location>
        <position position="42"/>
    </location>
    <ligand>
        <name>substrate</name>
    </ligand>
</feature>
<feature type="binding site" evidence="1">
    <location>
        <position position="50"/>
    </location>
    <ligand>
        <name>ATP</name>
        <dbReference type="ChEBI" id="CHEBI:30616"/>
    </ligand>
</feature>
<feature type="binding site" evidence="1">
    <location>
        <position position="50"/>
    </location>
    <ligand>
        <name>Mg(2+)</name>
        <dbReference type="ChEBI" id="CHEBI:18420"/>
    </ligand>
</feature>
<feature type="binding site" evidence="1">
    <location>
        <begin position="115"/>
        <end position="118"/>
    </location>
    <ligand>
        <name>ATP</name>
        <dbReference type="ChEBI" id="CHEBI:30616"/>
    </ligand>
</feature>
<feature type="binding site" evidence="1">
    <location>
        <position position="115"/>
    </location>
    <ligand>
        <name>Mg(2+)</name>
        <dbReference type="ChEBI" id="CHEBI:18420"/>
    </ligand>
</feature>
<feature type="binding site" evidence="1">
    <location>
        <begin position="175"/>
        <end position="176"/>
    </location>
    <ligand>
        <name>ATP</name>
        <dbReference type="ChEBI" id="CHEBI:30616"/>
    </ligand>
</feature>
<proteinExistence type="inferred from homology"/>
<accession>Q9K085</accession>
<reference key="1">
    <citation type="journal article" date="2000" name="Science">
        <title>Complete genome sequence of Neisseria meningitidis serogroup B strain MC58.</title>
        <authorList>
            <person name="Tettelin H."/>
            <person name="Saunders N.J."/>
            <person name="Heidelberg J.F."/>
            <person name="Jeffries A.C."/>
            <person name="Nelson K.E."/>
            <person name="Eisen J.A."/>
            <person name="Ketchum K.A."/>
            <person name="Hood D.W."/>
            <person name="Peden J.F."/>
            <person name="Dodson R.J."/>
            <person name="Nelson W.C."/>
            <person name="Gwinn M.L."/>
            <person name="DeBoy R.T."/>
            <person name="Peterson J.D."/>
            <person name="Hickey E.K."/>
            <person name="Haft D.H."/>
            <person name="Salzberg S.L."/>
            <person name="White O."/>
            <person name="Fleischmann R.D."/>
            <person name="Dougherty B.A."/>
            <person name="Mason T.M."/>
            <person name="Ciecko A."/>
            <person name="Parksey D.S."/>
            <person name="Blair E."/>
            <person name="Cittone H."/>
            <person name="Clark E.B."/>
            <person name="Cotton M.D."/>
            <person name="Utterback T.R."/>
            <person name="Khouri H.M."/>
            <person name="Qin H."/>
            <person name="Vamathevan J.J."/>
            <person name="Gill J."/>
            <person name="Scarlato V."/>
            <person name="Masignani V."/>
            <person name="Pizza M."/>
            <person name="Grandi G."/>
            <person name="Sun L."/>
            <person name="Smith H.O."/>
            <person name="Fraser C.M."/>
            <person name="Moxon E.R."/>
            <person name="Rappuoli R."/>
            <person name="Venter J.C."/>
        </authorList>
    </citation>
    <scope>NUCLEOTIDE SEQUENCE [LARGE SCALE GENOMIC DNA]</scope>
    <source>
        <strain>ATCC BAA-335 / MC58</strain>
    </source>
</reference>
<dbReference type="EC" id="6.3.3.3" evidence="1"/>
<dbReference type="EMBL" id="AE002098">
    <property type="protein sequence ID" value="AAF41146.1"/>
    <property type="molecule type" value="Genomic_DNA"/>
</dbReference>
<dbReference type="PIR" id="E81164">
    <property type="entry name" value="E81164"/>
</dbReference>
<dbReference type="RefSeq" id="NP_273775.1">
    <property type="nucleotide sequence ID" value="NC_003112.2"/>
</dbReference>
<dbReference type="RefSeq" id="WP_002225454.1">
    <property type="nucleotide sequence ID" value="NC_003112.2"/>
</dbReference>
<dbReference type="SMR" id="Q9K085"/>
<dbReference type="FunCoup" id="Q9K085">
    <property type="interactions" value="396"/>
</dbReference>
<dbReference type="STRING" id="122586.NMB0733"/>
<dbReference type="PaxDb" id="122586-NMB0733"/>
<dbReference type="KEGG" id="nme:NMB0733"/>
<dbReference type="PATRIC" id="fig|122586.8.peg.933"/>
<dbReference type="HOGENOM" id="CLU_072551_3_0_4"/>
<dbReference type="InParanoid" id="Q9K085"/>
<dbReference type="OrthoDB" id="9802097at2"/>
<dbReference type="UniPathway" id="UPA00078">
    <property type="reaction ID" value="UER00161"/>
</dbReference>
<dbReference type="Proteomes" id="UP000000425">
    <property type="component" value="Chromosome"/>
</dbReference>
<dbReference type="GO" id="GO:0005829">
    <property type="term" value="C:cytosol"/>
    <property type="evidence" value="ECO:0000318"/>
    <property type="project" value="GO_Central"/>
</dbReference>
<dbReference type="GO" id="GO:0005524">
    <property type="term" value="F:ATP binding"/>
    <property type="evidence" value="ECO:0007669"/>
    <property type="project" value="UniProtKB-UniRule"/>
</dbReference>
<dbReference type="GO" id="GO:0004141">
    <property type="term" value="F:dethiobiotin synthase activity"/>
    <property type="evidence" value="ECO:0000318"/>
    <property type="project" value="GO_Central"/>
</dbReference>
<dbReference type="GO" id="GO:0000287">
    <property type="term" value="F:magnesium ion binding"/>
    <property type="evidence" value="ECO:0007669"/>
    <property type="project" value="UniProtKB-UniRule"/>
</dbReference>
<dbReference type="GO" id="GO:0009102">
    <property type="term" value="P:biotin biosynthetic process"/>
    <property type="evidence" value="ECO:0000318"/>
    <property type="project" value="GO_Central"/>
</dbReference>
<dbReference type="CDD" id="cd03109">
    <property type="entry name" value="DTBS"/>
    <property type="match status" value="1"/>
</dbReference>
<dbReference type="FunFam" id="3.40.50.300:FF:000292">
    <property type="entry name" value="ATP-dependent dethiobiotin synthetase BioD"/>
    <property type="match status" value="1"/>
</dbReference>
<dbReference type="Gene3D" id="3.40.50.300">
    <property type="entry name" value="P-loop containing nucleotide triphosphate hydrolases"/>
    <property type="match status" value="1"/>
</dbReference>
<dbReference type="HAMAP" id="MF_00336">
    <property type="entry name" value="BioD"/>
    <property type="match status" value="1"/>
</dbReference>
<dbReference type="InterPro" id="IPR004472">
    <property type="entry name" value="DTB_synth_BioD"/>
</dbReference>
<dbReference type="InterPro" id="IPR027417">
    <property type="entry name" value="P-loop_NTPase"/>
</dbReference>
<dbReference type="NCBIfam" id="TIGR00347">
    <property type="entry name" value="bioD"/>
    <property type="match status" value="1"/>
</dbReference>
<dbReference type="PANTHER" id="PTHR43210:SF2">
    <property type="entry name" value="ATP-DEPENDENT DETHIOBIOTIN SYNTHETASE BIOD 2"/>
    <property type="match status" value="1"/>
</dbReference>
<dbReference type="PANTHER" id="PTHR43210">
    <property type="entry name" value="DETHIOBIOTIN SYNTHETASE"/>
    <property type="match status" value="1"/>
</dbReference>
<dbReference type="Pfam" id="PF13500">
    <property type="entry name" value="AAA_26"/>
    <property type="match status" value="1"/>
</dbReference>
<dbReference type="PIRSF" id="PIRSF006755">
    <property type="entry name" value="DTB_synth"/>
    <property type="match status" value="1"/>
</dbReference>
<dbReference type="SUPFAM" id="SSF52540">
    <property type="entry name" value="P-loop containing nucleoside triphosphate hydrolases"/>
    <property type="match status" value="1"/>
</dbReference>
<gene>
    <name evidence="1" type="primary">bioD</name>
    <name type="ordered locus">NMB0733</name>
</gene>
<protein>
    <recommendedName>
        <fullName evidence="1">ATP-dependent dethiobiotin synthetase BioD</fullName>
        <ecNumber evidence="1">6.3.3.3</ecNumber>
    </recommendedName>
    <alternativeName>
        <fullName evidence="1">DTB synthetase</fullName>
        <shortName evidence="1">DTBS</shortName>
    </alternativeName>
    <alternativeName>
        <fullName evidence="1">Dethiobiotin synthase</fullName>
    </alternativeName>
</protein>
<sequence>MKGVYFVSGIDTDIGKTVATGVLAKQLLQQGKSVITQKPVQTGCQNIADDIAVHRKIMGIPMQEADKRRLTMPEIFSYPASPHLAARLDGRALDLDKIRTATQELAAQYEVVLVEGAGGLMVPLTENLLTIDYIRQQGYPVILVTSGRLGSINHTLLSFAALKQYGIRLHSLVFNHIHDSRDAHIAQDSLSYLKCRLKADFSEAEWMELAKTDAV</sequence>
<comment type="function">
    <text evidence="1">Catalyzes a mechanistically unusual reaction, the ATP-dependent insertion of CO2 between the N7 and N8 nitrogen atoms of 7,8-diaminopelargonic acid (DAPA, also called 7,8-diammoniononanoate) to form a ureido ring.</text>
</comment>
<comment type="catalytic activity">
    <reaction evidence="1">
        <text>(7R,8S)-7,8-diammoniononanoate + CO2 + ATP = (4R,5S)-dethiobiotin + ADP + phosphate + 3 H(+)</text>
        <dbReference type="Rhea" id="RHEA:15805"/>
        <dbReference type="ChEBI" id="CHEBI:15378"/>
        <dbReference type="ChEBI" id="CHEBI:16526"/>
        <dbReference type="ChEBI" id="CHEBI:30616"/>
        <dbReference type="ChEBI" id="CHEBI:43474"/>
        <dbReference type="ChEBI" id="CHEBI:149469"/>
        <dbReference type="ChEBI" id="CHEBI:149473"/>
        <dbReference type="ChEBI" id="CHEBI:456216"/>
        <dbReference type="EC" id="6.3.3.3"/>
    </reaction>
</comment>
<comment type="cofactor">
    <cofactor evidence="1">
        <name>Mg(2+)</name>
        <dbReference type="ChEBI" id="CHEBI:18420"/>
    </cofactor>
</comment>
<comment type="pathway">
    <text evidence="1">Cofactor biosynthesis; biotin biosynthesis; biotin from 7,8-diaminononanoate: step 1/2.</text>
</comment>
<comment type="subunit">
    <text evidence="1">Homodimer.</text>
</comment>
<comment type="subcellular location">
    <subcellularLocation>
        <location evidence="1">Cytoplasm</location>
    </subcellularLocation>
</comment>
<comment type="similarity">
    <text evidence="1">Belongs to the dethiobiotin synthetase family.</text>
</comment>
<keyword id="KW-0067">ATP-binding</keyword>
<keyword id="KW-0093">Biotin biosynthesis</keyword>
<keyword id="KW-0963">Cytoplasm</keyword>
<keyword id="KW-0436">Ligase</keyword>
<keyword id="KW-0460">Magnesium</keyword>
<keyword id="KW-0479">Metal-binding</keyword>
<keyword id="KW-0547">Nucleotide-binding</keyword>
<keyword id="KW-1185">Reference proteome</keyword>